<proteinExistence type="evidence at transcript level"/>
<keyword id="KW-0285">Flavoprotein</keyword>
<keyword id="KW-0288">FMN</keyword>
<keyword id="KW-0323">Glycolate pathway</keyword>
<keyword id="KW-0560">Oxidoreductase</keyword>
<keyword id="KW-0576">Peroxisome</keyword>
<keyword id="KW-0601">Photorespiration</keyword>
<keyword id="KW-1185">Reference proteome</keyword>
<protein>
    <recommendedName>
        <fullName>Glycolate oxidase 5</fullName>
        <shortName>GOX 3</shortName>
        <shortName>OsGLO5</shortName>
        <ecNumber evidence="3">1.1.3.15</ecNumber>
    </recommendedName>
    <alternativeName>
        <fullName>Peroxisomal (S)-2-hydroxy-acid oxidase GLO5</fullName>
    </alternativeName>
    <alternativeName>
        <fullName>Short chain alpha-hydroxy acid oxidase GLO5</fullName>
    </alternativeName>
</protein>
<accession>Q6YT73</accession>
<accession>A0A0P0X2P6</accession>
<accession>B9FVJ4</accession>
<dbReference type="EC" id="1.1.3.15" evidence="3"/>
<dbReference type="EMBL" id="AP005632">
    <property type="protein sequence ID" value="BAD31578.1"/>
    <property type="molecule type" value="Genomic_DNA"/>
</dbReference>
<dbReference type="EMBL" id="AP006163">
    <property type="protein sequence ID" value="BAC84719.1"/>
    <property type="molecule type" value="Genomic_DNA"/>
</dbReference>
<dbReference type="EMBL" id="AP008213">
    <property type="protein sequence ID" value="BAF20823.1"/>
    <property type="molecule type" value="Genomic_DNA"/>
</dbReference>
<dbReference type="EMBL" id="AP014963">
    <property type="protein sequence ID" value="BAT00100.1"/>
    <property type="molecule type" value="Genomic_DNA"/>
</dbReference>
<dbReference type="EMBL" id="CM000144">
    <property type="protein sequence ID" value="EEE66581.1"/>
    <property type="molecule type" value="Genomic_DNA"/>
</dbReference>
<dbReference type="EMBL" id="AK062189">
    <property type="protein sequence ID" value="BAG88242.1"/>
    <property type="molecule type" value="mRNA"/>
</dbReference>
<dbReference type="EMBL" id="AK103933">
    <property type="protein sequence ID" value="BAG96328.1"/>
    <property type="molecule type" value="mRNA"/>
</dbReference>
<dbReference type="RefSeq" id="XP_015646859.1">
    <property type="nucleotide sequence ID" value="XM_015791373.1"/>
</dbReference>
<dbReference type="SMR" id="Q6YT73"/>
<dbReference type="FunCoup" id="Q6YT73">
    <property type="interactions" value="1601"/>
</dbReference>
<dbReference type="STRING" id="39947.Q6YT73"/>
<dbReference type="PaxDb" id="39947-Q6YT73"/>
<dbReference type="EnsemblPlants" id="Os07t0152900-01">
    <property type="protein sequence ID" value="Os07t0152900-01"/>
    <property type="gene ID" value="Os07g0152900"/>
</dbReference>
<dbReference type="EnsemblPlants" id="Os07t0152900-03">
    <property type="protein sequence ID" value="Os07t0152900-03"/>
    <property type="gene ID" value="Os07g0152900"/>
</dbReference>
<dbReference type="EnsemblPlants" id="Os07t0152900-04">
    <property type="protein sequence ID" value="Os07t0152900-04"/>
    <property type="gene ID" value="Os07g0152900"/>
</dbReference>
<dbReference type="Gramene" id="Os07t0152900-01">
    <property type="protein sequence ID" value="Os07t0152900-01"/>
    <property type="gene ID" value="Os07g0152900"/>
</dbReference>
<dbReference type="Gramene" id="Os07t0152900-03">
    <property type="protein sequence ID" value="Os07t0152900-03"/>
    <property type="gene ID" value="Os07g0152900"/>
</dbReference>
<dbReference type="Gramene" id="Os07t0152900-04">
    <property type="protein sequence ID" value="Os07t0152900-04"/>
    <property type="gene ID" value="Os07g0152900"/>
</dbReference>
<dbReference type="KEGG" id="dosa:Os07g0152900"/>
<dbReference type="eggNOG" id="KOG0538">
    <property type="taxonomic scope" value="Eukaryota"/>
</dbReference>
<dbReference type="HOGENOM" id="CLU_020639_0_0_1"/>
<dbReference type="InParanoid" id="Q6YT73"/>
<dbReference type="OMA" id="RIWFRPK"/>
<dbReference type="OrthoDB" id="25826at2759"/>
<dbReference type="PlantReactome" id="R-OSA-1119312">
    <property type="pathway name" value="Photorespiration"/>
</dbReference>
<dbReference type="PlantReactome" id="R-OSA-1119596">
    <property type="pathway name" value="Glutamate biosynthesis I"/>
</dbReference>
<dbReference type="UniPathway" id="UPA00951">
    <property type="reaction ID" value="UER00912"/>
</dbReference>
<dbReference type="Proteomes" id="UP000000763">
    <property type="component" value="Chromosome 7"/>
</dbReference>
<dbReference type="Proteomes" id="UP000007752">
    <property type="component" value="Chromosome 7"/>
</dbReference>
<dbReference type="Proteomes" id="UP000059680">
    <property type="component" value="Chromosome 7"/>
</dbReference>
<dbReference type="ExpressionAtlas" id="Q6YT73">
    <property type="expression patterns" value="baseline and differential"/>
</dbReference>
<dbReference type="GO" id="GO:0005777">
    <property type="term" value="C:peroxisome"/>
    <property type="evidence" value="ECO:0000250"/>
    <property type="project" value="UniProtKB"/>
</dbReference>
<dbReference type="GO" id="GO:0003973">
    <property type="term" value="F:(S)-2-hydroxy-acid oxidase activity"/>
    <property type="evidence" value="ECO:0000250"/>
    <property type="project" value="UniProtKB"/>
</dbReference>
<dbReference type="GO" id="GO:0010181">
    <property type="term" value="F:FMN binding"/>
    <property type="evidence" value="ECO:0007669"/>
    <property type="project" value="InterPro"/>
</dbReference>
<dbReference type="GO" id="GO:0009854">
    <property type="term" value="P:oxidative photosynthetic carbon pathway"/>
    <property type="evidence" value="ECO:0007669"/>
    <property type="project" value="UniProtKB-KW"/>
</dbReference>
<dbReference type="GO" id="GO:0009853">
    <property type="term" value="P:photorespiration"/>
    <property type="evidence" value="ECO:0000250"/>
    <property type="project" value="UniProtKB"/>
</dbReference>
<dbReference type="GO" id="GO:0010109">
    <property type="term" value="P:regulation of photosynthesis"/>
    <property type="evidence" value="ECO:0000250"/>
    <property type="project" value="UniProtKB"/>
</dbReference>
<dbReference type="GO" id="GO:0051707">
    <property type="term" value="P:response to other organism"/>
    <property type="evidence" value="ECO:0007669"/>
    <property type="project" value="UniProtKB-ARBA"/>
</dbReference>
<dbReference type="GO" id="GO:0046718">
    <property type="term" value="P:symbiont entry into host cell"/>
    <property type="evidence" value="ECO:0000250"/>
    <property type="project" value="UniProtKB"/>
</dbReference>
<dbReference type="CDD" id="cd02809">
    <property type="entry name" value="alpha_hydroxyacid_oxid_FMN"/>
    <property type="match status" value="1"/>
</dbReference>
<dbReference type="FunFam" id="3.20.20.70:FF:000063">
    <property type="entry name" value="peroxisomal (S)-2-hydroxy-acid oxidase GLO1"/>
    <property type="match status" value="1"/>
</dbReference>
<dbReference type="Gene3D" id="3.20.20.70">
    <property type="entry name" value="Aldolase class I"/>
    <property type="match status" value="1"/>
</dbReference>
<dbReference type="InterPro" id="IPR013785">
    <property type="entry name" value="Aldolase_TIM"/>
</dbReference>
<dbReference type="InterPro" id="IPR012133">
    <property type="entry name" value="Alpha-hydoxy_acid_DH_FMN"/>
</dbReference>
<dbReference type="InterPro" id="IPR000262">
    <property type="entry name" value="FMN-dep_DH"/>
</dbReference>
<dbReference type="InterPro" id="IPR037396">
    <property type="entry name" value="FMN_HAD"/>
</dbReference>
<dbReference type="InterPro" id="IPR008259">
    <property type="entry name" value="FMN_hydac_DH_AS"/>
</dbReference>
<dbReference type="PANTHER" id="PTHR10578:SF107">
    <property type="entry name" value="2-HYDROXYACID OXIDASE 1"/>
    <property type="match status" value="1"/>
</dbReference>
<dbReference type="PANTHER" id="PTHR10578">
    <property type="entry name" value="S -2-HYDROXY-ACID OXIDASE-RELATED"/>
    <property type="match status" value="1"/>
</dbReference>
<dbReference type="Pfam" id="PF01070">
    <property type="entry name" value="FMN_dh"/>
    <property type="match status" value="1"/>
</dbReference>
<dbReference type="PIRSF" id="PIRSF000138">
    <property type="entry name" value="Al-hdrx_acd_dh"/>
    <property type="match status" value="1"/>
</dbReference>
<dbReference type="SUPFAM" id="SSF51395">
    <property type="entry name" value="FMN-linked oxidoreductases"/>
    <property type="match status" value="1"/>
</dbReference>
<dbReference type="PROSITE" id="PS00557">
    <property type="entry name" value="FMN_HYDROXY_ACID_DH_1"/>
    <property type="match status" value="1"/>
</dbReference>
<dbReference type="PROSITE" id="PS51349">
    <property type="entry name" value="FMN_HYDROXY_ACID_DH_2"/>
    <property type="match status" value="1"/>
</dbReference>
<sequence length="369" mass="40245">MGEITNVTEYQAIAKQKLPKMIYDYYASGAEDEWTLQENREAFARILFRPRILIDVSKIDMATTVLGFKISMPIMIAPSAMQKMAHPDGEYATARAASAAGTIMTLSSWATSSVEEVASTGPGIRFFQLYVYKDRRVVEQLVRRAERAGFKAIALTVDTPRLGRREADIKNRFVLPPFLTLKNFEGLELGKMDQASDSGLASYVAGQIDRTLSWKDVKWLQTITTLPILVKGVITAEDTRLAVENGAAGIIVSNHGARQLDYVPATISALEEVVKAARGQLPVFLDGGVRRGTDVFKALALGAAGVFIGRPVVFSLAAAGEAGVRNVLQMLRDEFELTMALSGCTSLADITRNHVITEADKLGVMPSRL</sequence>
<feature type="chain" id="PRO_0000403417" description="Glycolate oxidase 5">
    <location>
        <begin position="1"/>
        <end position="369"/>
    </location>
</feature>
<feature type="domain" description="FMN hydroxy acid dehydrogenase" evidence="6">
    <location>
        <begin position="1"/>
        <end position="360"/>
    </location>
</feature>
<feature type="short sequence motif" description="Microbody targeting signal" evidence="5">
    <location>
        <begin position="367"/>
        <end position="369"/>
    </location>
</feature>
<feature type="active site" description="Proton acceptor" evidence="2">
    <location>
        <position position="255"/>
    </location>
</feature>
<feature type="binding site" evidence="4">
    <location>
        <position position="25"/>
    </location>
    <ligand>
        <name>glyoxylate</name>
        <dbReference type="ChEBI" id="CHEBI:36655"/>
    </ligand>
</feature>
<feature type="binding site" evidence="2">
    <location>
        <begin position="78"/>
        <end position="80"/>
    </location>
    <ligand>
        <name>FMN</name>
        <dbReference type="ChEBI" id="CHEBI:58210"/>
    </ligand>
</feature>
<feature type="binding site" evidence="2">
    <location>
        <position position="107"/>
    </location>
    <ligand>
        <name>FMN</name>
        <dbReference type="ChEBI" id="CHEBI:58210"/>
    </ligand>
</feature>
<feature type="binding site" evidence="2">
    <location>
        <begin position="128"/>
        <end position="130"/>
    </location>
    <ligand>
        <name>FMN</name>
        <dbReference type="ChEBI" id="CHEBI:58210"/>
    </ligand>
</feature>
<feature type="binding site" evidence="4">
    <location>
        <position position="130"/>
    </location>
    <ligand>
        <name>glyoxylate</name>
        <dbReference type="ChEBI" id="CHEBI:36655"/>
    </ligand>
</feature>
<feature type="binding site" evidence="2">
    <location>
        <position position="156"/>
    </location>
    <ligand>
        <name>FMN</name>
        <dbReference type="ChEBI" id="CHEBI:58210"/>
    </ligand>
</feature>
<feature type="binding site" evidence="4">
    <location>
        <position position="165"/>
    </location>
    <ligand>
        <name>glyoxylate</name>
        <dbReference type="ChEBI" id="CHEBI:36655"/>
    </ligand>
</feature>
<feature type="binding site" evidence="2">
    <location>
        <position position="231"/>
    </location>
    <ligand>
        <name>FMN</name>
        <dbReference type="ChEBI" id="CHEBI:58210"/>
    </ligand>
</feature>
<feature type="binding site" evidence="2">
    <location>
        <position position="253"/>
    </location>
    <ligand>
        <name>FMN</name>
        <dbReference type="ChEBI" id="CHEBI:58210"/>
    </ligand>
</feature>
<feature type="binding site" evidence="4">
    <location>
        <position position="255"/>
    </location>
    <ligand>
        <name>glyoxylate</name>
        <dbReference type="ChEBI" id="CHEBI:36655"/>
    </ligand>
</feature>
<feature type="binding site" evidence="4">
    <location>
        <position position="258"/>
    </location>
    <ligand>
        <name>glyoxylate</name>
        <dbReference type="ChEBI" id="CHEBI:36655"/>
    </ligand>
</feature>
<feature type="binding site" evidence="2">
    <location>
        <begin position="286"/>
        <end position="290"/>
    </location>
    <ligand>
        <name>FMN</name>
        <dbReference type="ChEBI" id="CHEBI:58210"/>
    </ligand>
</feature>
<feature type="binding site" evidence="2">
    <location>
        <begin position="309"/>
        <end position="310"/>
    </location>
    <ligand>
        <name>FMN</name>
        <dbReference type="ChEBI" id="CHEBI:58210"/>
    </ligand>
</feature>
<feature type="site" description="Involved in determining the substrate specificity of glycolate oxidase" evidence="2">
    <location>
        <position position="109"/>
    </location>
</feature>
<feature type="sequence conflict" description="In Ref. 4; EEE66581." evidence="7" ref="4">
    <original>A</original>
    <variation>S</variation>
    <location>
        <position position="265"/>
    </location>
</feature>
<name>GLO5_ORYSJ</name>
<organism>
    <name type="scientific">Oryza sativa subsp. japonica</name>
    <name type="common">Rice</name>
    <dbReference type="NCBI Taxonomy" id="39947"/>
    <lineage>
        <taxon>Eukaryota</taxon>
        <taxon>Viridiplantae</taxon>
        <taxon>Streptophyta</taxon>
        <taxon>Embryophyta</taxon>
        <taxon>Tracheophyta</taxon>
        <taxon>Spermatophyta</taxon>
        <taxon>Magnoliopsida</taxon>
        <taxon>Liliopsida</taxon>
        <taxon>Poales</taxon>
        <taxon>Poaceae</taxon>
        <taxon>BOP clade</taxon>
        <taxon>Oryzoideae</taxon>
        <taxon>Oryzeae</taxon>
        <taxon>Oryzinae</taxon>
        <taxon>Oryza</taxon>
        <taxon>Oryza sativa</taxon>
    </lineage>
</organism>
<reference key="1">
    <citation type="journal article" date="2005" name="Nature">
        <title>The map-based sequence of the rice genome.</title>
        <authorList>
            <consortium name="International rice genome sequencing project (IRGSP)"/>
        </authorList>
    </citation>
    <scope>NUCLEOTIDE SEQUENCE [LARGE SCALE GENOMIC DNA]</scope>
    <source>
        <strain>cv. Nipponbare</strain>
    </source>
</reference>
<reference key="2">
    <citation type="journal article" date="2008" name="Nucleic Acids Res.">
        <title>The rice annotation project database (RAP-DB): 2008 update.</title>
        <authorList>
            <consortium name="The rice annotation project (RAP)"/>
        </authorList>
    </citation>
    <scope>GENOME REANNOTATION</scope>
    <source>
        <strain>cv. Nipponbare</strain>
    </source>
</reference>
<reference key="3">
    <citation type="journal article" date="2013" name="Rice">
        <title>Improvement of the Oryza sativa Nipponbare reference genome using next generation sequence and optical map data.</title>
        <authorList>
            <person name="Kawahara Y."/>
            <person name="de la Bastide M."/>
            <person name="Hamilton J.P."/>
            <person name="Kanamori H."/>
            <person name="McCombie W.R."/>
            <person name="Ouyang S."/>
            <person name="Schwartz D.C."/>
            <person name="Tanaka T."/>
            <person name="Wu J."/>
            <person name="Zhou S."/>
            <person name="Childs K.L."/>
            <person name="Davidson R.M."/>
            <person name="Lin H."/>
            <person name="Quesada-Ocampo L."/>
            <person name="Vaillancourt B."/>
            <person name="Sakai H."/>
            <person name="Lee S.S."/>
            <person name="Kim J."/>
            <person name="Numa H."/>
            <person name="Itoh T."/>
            <person name="Buell C.R."/>
            <person name="Matsumoto T."/>
        </authorList>
    </citation>
    <scope>GENOME REANNOTATION</scope>
    <source>
        <strain>cv. Nipponbare</strain>
    </source>
</reference>
<reference key="4">
    <citation type="journal article" date="2005" name="PLoS Biol.">
        <title>The genomes of Oryza sativa: a history of duplications.</title>
        <authorList>
            <person name="Yu J."/>
            <person name="Wang J."/>
            <person name="Lin W."/>
            <person name="Li S."/>
            <person name="Li H."/>
            <person name="Zhou J."/>
            <person name="Ni P."/>
            <person name="Dong W."/>
            <person name="Hu S."/>
            <person name="Zeng C."/>
            <person name="Zhang J."/>
            <person name="Zhang Y."/>
            <person name="Li R."/>
            <person name="Xu Z."/>
            <person name="Li S."/>
            <person name="Li X."/>
            <person name="Zheng H."/>
            <person name="Cong L."/>
            <person name="Lin L."/>
            <person name="Yin J."/>
            <person name="Geng J."/>
            <person name="Li G."/>
            <person name="Shi J."/>
            <person name="Liu J."/>
            <person name="Lv H."/>
            <person name="Li J."/>
            <person name="Wang J."/>
            <person name="Deng Y."/>
            <person name="Ran L."/>
            <person name="Shi X."/>
            <person name="Wang X."/>
            <person name="Wu Q."/>
            <person name="Li C."/>
            <person name="Ren X."/>
            <person name="Wang J."/>
            <person name="Wang X."/>
            <person name="Li D."/>
            <person name="Liu D."/>
            <person name="Zhang X."/>
            <person name="Ji Z."/>
            <person name="Zhao W."/>
            <person name="Sun Y."/>
            <person name="Zhang Z."/>
            <person name="Bao J."/>
            <person name="Han Y."/>
            <person name="Dong L."/>
            <person name="Ji J."/>
            <person name="Chen P."/>
            <person name="Wu S."/>
            <person name="Liu J."/>
            <person name="Xiao Y."/>
            <person name="Bu D."/>
            <person name="Tan J."/>
            <person name="Yang L."/>
            <person name="Ye C."/>
            <person name="Zhang J."/>
            <person name="Xu J."/>
            <person name="Zhou Y."/>
            <person name="Yu Y."/>
            <person name="Zhang B."/>
            <person name="Zhuang S."/>
            <person name="Wei H."/>
            <person name="Liu B."/>
            <person name="Lei M."/>
            <person name="Yu H."/>
            <person name="Li Y."/>
            <person name="Xu H."/>
            <person name="Wei S."/>
            <person name="He X."/>
            <person name="Fang L."/>
            <person name="Zhang Z."/>
            <person name="Zhang Y."/>
            <person name="Huang X."/>
            <person name="Su Z."/>
            <person name="Tong W."/>
            <person name="Li J."/>
            <person name="Tong Z."/>
            <person name="Li S."/>
            <person name="Ye J."/>
            <person name="Wang L."/>
            <person name="Fang L."/>
            <person name="Lei T."/>
            <person name="Chen C.-S."/>
            <person name="Chen H.-C."/>
            <person name="Xu Z."/>
            <person name="Li H."/>
            <person name="Huang H."/>
            <person name="Zhang F."/>
            <person name="Xu H."/>
            <person name="Li N."/>
            <person name="Zhao C."/>
            <person name="Li S."/>
            <person name="Dong L."/>
            <person name="Huang Y."/>
            <person name="Li L."/>
            <person name="Xi Y."/>
            <person name="Qi Q."/>
            <person name="Li W."/>
            <person name="Zhang B."/>
            <person name="Hu W."/>
            <person name="Zhang Y."/>
            <person name="Tian X."/>
            <person name="Jiao Y."/>
            <person name="Liang X."/>
            <person name="Jin J."/>
            <person name="Gao L."/>
            <person name="Zheng W."/>
            <person name="Hao B."/>
            <person name="Liu S.-M."/>
            <person name="Wang W."/>
            <person name="Yuan L."/>
            <person name="Cao M."/>
            <person name="McDermott J."/>
            <person name="Samudrala R."/>
            <person name="Wang J."/>
            <person name="Wong G.K.-S."/>
            <person name="Yang H."/>
        </authorList>
    </citation>
    <scope>NUCLEOTIDE SEQUENCE [LARGE SCALE GENOMIC DNA]</scope>
    <source>
        <strain>cv. Nipponbare</strain>
    </source>
</reference>
<reference key="5">
    <citation type="journal article" date="2003" name="Science">
        <title>Collection, mapping, and annotation of over 28,000 cDNA clones from japonica rice.</title>
        <authorList>
            <consortium name="The rice full-length cDNA consortium"/>
        </authorList>
    </citation>
    <scope>NUCLEOTIDE SEQUENCE [LARGE SCALE MRNA]</scope>
    <source>
        <strain>cv. Nipponbare</strain>
    </source>
</reference>
<reference key="6">
    <citation type="journal article" date="2009" name="J. Exp. Bot.">
        <title>Inducible antisense suppression of glycolate oxidase reveals its strong regulation over photosynthesis in rice.</title>
        <authorList>
            <person name="Xu H.-W."/>
            <person name="Zhang J."/>
            <person name="Zeng J."/>
            <person name="Jiang L."/>
            <person name="Liu E."/>
            <person name="Peng C."/>
            <person name="He Z.-H."/>
            <person name="Peng X.-X."/>
        </authorList>
    </citation>
    <scope>GENE FAMILY</scope>
    <scope>NOMENCLATURE</scope>
</reference>
<comment type="function">
    <text evidence="3">Catalyzes the oxidation of glycolate to glyoxylate, with a reduction of O2 to H2O2. Is a key enzyme in photorespiration in green plants.</text>
</comment>
<comment type="catalytic activity">
    <reaction evidence="3">
        <text>glycolate + O2 = glyoxylate + H2O2</text>
        <dbReference type="Rhea" id="RHEA:25311"/>
        <dbReference type="ChEBI" id="CHEBI:15379"/>
        <dbReference type="ChEBI" id="CHEBI:16240"/>
        <dbReference type="ChEBI" id="CHEBI:29805"/>
        <dbReference type="ChEBI" id="CHEBI:36655"/>
        <dbReference type="EC" id="1.1.3.15"/>
    </reaction>
    <physiologicalReaction direction="left-to-right" evidence="3">
        <dbReference type="Rhea" id="RHEA:25312"/>
    </physiologicalReaction>
</comment>
<comment type="cofactor">
    <cofactor evidence="2">
        <name>FMN</name>
        <dbReference type="ChEBI" id="CHEBI:58210"/>
    </cofactor>
</comment>
<comment type="pathway">
    <text evidence="3">Photosynthesis; photorespiration; glycine from 2-phosphoglycolate: step 2/3.</text>
</comment>
<comment type="subunit">
    <text evidence="2">Homotetramer.</text>
</comment>
<comment type="subcellular location">
    <subcellularLocation>
        <location evidence="1">Peroxisome</location>
    </subcellularLocation>
</comment>
<comment type="similarity">
    <text evidence="6">Belongs to the FMN-dependent alpha-hydroxy acid dehydrogenase family.</text>
</comment>
<gene>
    <name type="primary">GLO5</name>
    <name type="ordered locus">Os07g0152900</name>
    <name type="ordered locus">LOC_Os07g05820</name>
    <name type="ORF">B1364A02.33-1</name>
    <name type="ORF">OsJ_23125</name>
    <name type="ORF">OSJNBb0050B07.1-1</name>
</gene>
<evidence type="ECO:0000250" key="1"/>
<evidence type="ECO:0000250" key="2">
    <source>
        <dbReference type="UniProtKB" id="P05414"/>
    </source>
</evidence>
<evidence type="ECO:0000250" key="3">
    <source>
        <dbReference type="UniProtKB" id="Q9LRR9"/>
    </source>
</evidence>
<evidence type="ECO:0000250" key="4">
    <source>
        <dbReference type="UniProtKB" id="Q9UJM8"/>
    </source>
</evidence>
<evidence type="ECO:0000255" key="5"/>
<evidence type="ECO:0000255" key="6">
    <source>
        <dbReference type="PROSITE-ProRule" id="PRU00683"/>
    </source>
</evidence>
<evidence type="ECO:0000305" key="7"/>